<name>TSR3_METMA</name>
<comment type="function">
    <text evidence="2">Aminocarboxypropyltransferase that catalyzes the aminocarboxypropyl transfer on pseudouridine corresponding to position 914 in M.jannaschii 16S rRNA. It constitutes the last step in biosynthesis of the hypermodified N1-methyl-N3-(3-amino-3-carboxypropyl) pseudouridine (m1acp3-Psi).</text>
</comment>
<comment type="catalytic activity">
    <reaction evidence="2">
        <text>an N(1)-methylpseudouridine in rRNA + S-adenosyl-L-methionine = N(1)-methyl-N(3)-[(3S)-3-amino-3-carboxypropyl]pseudouridine in rRNA + S-methyl-5'-thioadenosine + H(+)</text>
        <dbReference type="Rhea" id="RHEA:63296"/>
        <dbReference type="Rhea" id="RHEA-COMP:11634"/>
        <dbReference type="Rhea" id="RHEA-COMP:16310"/>
        <dbReference type="ChEBI" id="CHEBI:15378"/>
        <dbReference type="ChEBI" id="CHEBI:17509"/>
        <dbReference type="ChEBI" id="CHEBI:59789"/>
        <dbReference type="ChEBI" id="CHEBI:74890"/>
        <dbReference type="ChEBI" id="CHEBI:146234"/>
        <dbReference type="EC" id="2.5.1.157"/>
    </reaction>
</comment>
<comment type="subcellular location">
    <subcellularLocation>
        <location evidence="2">Cytoplasm</location>
    </subcellularLocation>
</comment>
<comment type="similarity">
    <text evidence="2">Belongs to the TDD superfamily. TSR3 family.</text>
</comment>
<evidence type="ECO:0000250" key="1">
    <source>
        <dbReference type="UniProtKB" id="E1QU22"/>
    </source>
</evidence>
<evidence type="ECO:0000255" key="2">
    <source>
        <dbReference type="HAMAP-Rule" id="MF_01116"/>
    </source>
</evidence>
<evidence type="ECO:0000305" key="3"/>
<gene>
    <name type="ordered locus">MM_3074</name>
</gene>
<proteinExistence type="inferred from homology"/>
<reference key="1">
    <citation type="journal article" date="2002" name="J. Mol. Microbiol. Biotechnol.">
        <title>The genome of Methanosarcina mazei: evidence for lateral gene transfer between Bacteria and Archaea.</title>
        <authorList>
            <person name="Deppenmeier U."/>
            <person name="Johann A."/>
            <person name="Hartsch T."/>
            <person name="Merkl R."/>
            <person name="Schmitz R.A."/>
            <person name="Martinez-Arias R."/>
            <person name="Henne A."/>
            <person name="Wiezer A."/>
            <person name="Baeumer S."/>
            <person name="Jacobi C."/>
            <person name="Brueggemann H."/>
            <person name="Lienard T."/>
            <person name="Christmann A."/>
            <person name="Boemecke M."/>
            <person name="Steckel S."/>
            <person name="Bhattacharyya A."/>
            <person name="Lykidis A."/>
            <person name="Overbeek R."/>
            <person name="Klenk H.-P."/>
            <person name="Gunsalus R.P."/>
            <person name="Fritz H.-J."/>
            <person name="Gottschalk G."/>
        </authorList>
    </citation>
    <scope>NUCLEOTIDE SEQUENCE [LARGE SCALE GENOMIC DNA]</scope>
    <source>
        <strain>ATCC BAA-159 / DSM 3647 / Goe1 / Go1 / JCM 11833 / OCM 88</strain>
    </source>
</reference>
<feature type="chain" id="PRO_0000094420" description="16S rRNA aminocarboxypropyltransferase">
    <location>
        <begin position="1"/>
        <end position="173"/>
    </location>
</feature>
<feature type="binding site" evidence="1 2">
    <location>
        <position position="25"/>
    </location>
    <ligand>
        <name>S-adenosyl-L-methionine</name>
        <dbReference type="ChEBI" id="CHEBI:59789"/>
    </ligand>
</feature>
<feature type="binding site" evidence="2">
    <location>
        <position position="72"/>
    </location>
    <ligand>
        <name>S-adenosyl-L-methionine</name>
        <dbReference type="ChEBI" id="CHEBI:59789"/>
    </ligand>
</feature>
<feature type="binding site" evidence="1 2">
    <location>
        <position position="96"/>
    </location>
    <ligand>
        <name>S-adenosyl-L-methionine</name>
        <dbReference type="ChEBI" id="CHEBI:59789"/>
    </ligand>
</feature>
<feature type="binding site" evidence="2">
    <location>
        <position position="115"/>
    </location>
    <ligand>
        <name>S-adenosyl-L-methionine</name>
        <dbReference type="ChEBI" id="CHEBI:59789"/>
    </ligand>
</feature>
<accession>Q8PSK5</accession>
<keyword id="KW-0963">Cytoplasm</keyword>
<keyword id="KW-0690">Ribosome biogenesis</keyword>
<keyword id="KW-0698">rRNA processing</keyword>
<keyword id="KW-0949">S-adenosyl-L-methionine</keyword>
<keyword id="KW-0808">Transferase</keyword>
<protein>
    <recommendedName>
        <fullName evidence="2 3">16S rRNA aminocarboxypropyltransferase</fullName>
        <ecNumber evidence="2">2.5.1.157</ecNumber>
    </recommendedName>
</protein>
<sequence length="173" mass="19894">MNQTKSRDIPLYIYHAGQCDPKKCTGRKMARFELARLYDRISRLPRSAILLDPMAEKALSPADDPKKGIIVLDCSWEEVERVFPELEKLNLEHRALPYMLAGNPVNFGRPFKLNSAEAFAAALYILGYKEQAEKVMSKFNWGHSFLELNREPLEEYSTAKNSTEIVEIQSHYI</sequence>
<organism>
    <name type="scientific">Methanosarcina mazei (strain ATCC BAA-159 / DSM 3647 / Goe1 / Go1 / JCM 11833 / OCM 88)</name>
    <name type="common">Methanosarcina frisia</name>
    <dbReference type="NCBI Taxonomy" id="192952"/>
    <lineage>
        <taxon>Archaea</taxon>
        <taxon>Methanobacteriati</taxon>
        <taxon>Methanobacteriota</taxon>
        <taxon>Stenosarchaea group</taxon>
        <taxon>Methanomicrobia</taxon>
        <taxon>Methanosarcinales</taxon>
        <taxon>Methanosarcinaceae</taxon>
        <taxon>Methanosarcina</taxon>
    </lineage>
</organism>
<dbReference type="EC" id="2.5.1.157" evidence="2"/>
<dbReference type="EMBL" id="AE008384">
    <property type="protein sequence ID" value="AAM32770.1"/>
    <property type="molecule type" value="Genomic_DNA"/>
</dbReference>
<dbReference type="RefSeq" id="WP_011034972.1">
    <property type="nucleotide sequence ID" value="NC_003901.1"/>
</dbReference>
<dbReference type="SMR" id="Q8PSK5"/>
<dbReference type="KEGG" id="mma:MM_3074"/>
<dbReference type="PATRIC" id="fig|192952.21.peg.3564"/>
<dbReference type="eggNOG" id="arCOG04733">
    <property type="taxonomic scope" value="Archaea"/>
</dbReference>
<dbReference type="HOGENOM" id="CLU_035060_4_1_2"/>
<dbReference type="Proteomes" id="UP000000595">
    <property type="component" value="Chromosome"/>
</dbReference>
<dbReference type="GO" id="GO:0005737">
    <property type="term" value="C:cytoplasm"/>
    <property type="evidence" value="ECO:0007669"/>
    <property type="project" value="UniProtKB-SubCell"/>
</dbReference>
<dbReference type="GO" id="GO:0106388">
    <property type="term" value="F:18S rRNA aminocarboxypropyltransferase activity"/>
    <property type="evidence" value="ECO:0007669"/>
    <property type="project" value="InterPro"/>
</dbReference>
<dbReference type="GO" id="GO:1904047">
    <property type="term" value="F:S-adenosyl-L-methionine binding"/>
    <property type="evidence" value="ECO:0007669"/>
    <property type="project" value="UniProtKB-UniRule"/>
</dbReference>
<dbReference type="GO" id="GO:0000455">
    <property type="term" value="P:enzyme-directed rRNA pseudouridine synthesis"/>
    <property type="evidence" value="ECO:0007669"/>
    <property type="project" value="UniProtKB-UniRule"/>
</dbReference>
<dbReference type="HAMAP" id="MF_01116">
    <property type="entry name" value="TSR3"/>
    <property type="match status" value="1"/>
</dbReference>
<dbReference type="InterPro" id="IPR007209">
    <property type="entry name" value="RNaseL-inhib-like_metal-bd_dom"/>
</dbReference>
<dbReference type="InterPro" id="IPR022968">
    <property type="entry name" value="Tsr3-like"/>
</dbReference>
<dbReference type="InterPro" id="IPR007177">
    <property type="entry name" value="Tsr3_C"/>
</dbReference>
<dbReference type="NCBIfam" id="NF002621">
    <property type="entry name" value="PRK02287.1"/>
    <property type="match status" value="1"/>
</dbReference>
<dbReference type="PANTHER" id="PTHR20426:SF0">
    <property type="entry name" value="18S RRNA AMINOCARBOXYPROPYLTRANSFERASE"/>
    <property type="match status" value="1"/>
</dbReference>
<dbReference type="PANTHER" id="PTHR20426">
    <property type="entry name" value="RIBOSOME BIOGENESIS PROTEIN TSR3 HOMOLOG"/>
    <property type="match status" value="1"/>
</dbReference>
<dbReference type="Pfam" id="PF04068">
    <property type="entry name" value="Fer4_RLI"/>
    <property type="match status" value="1"/>
</dbReference>
<dbReference type="Pfam" id="PF04034">
    <property type="entry name" value="Ribo_biogen_C"/>
    <property type="match status" value="1"/>
</dbReference>